<gene>
    <name type="ORF">GH15927</name>
</gene>
<accession>B4JUE4</accession>
<keyword id="KW-0963">Cytoplasm</keyword>
<keyword id="KW-0342">GTP-binding</keyword>
<keyword id="KW-0436">Ligase</keyword>
<keyword id="KW-0460">Magnesium</keyword>
<keyword id="KW-0479">Metal-binding</keyword>
<keyword id="KW-0547">Nucleotide-binding</keyword>
<keyword id="KW-0658">Purine biosynthesis</keyword>
<keyword id="KW-1185">Reference proteome</keyword>
<protein>
    <recommendedName>
        <fullName evidence="2">Adenylosuccinate synthetase</fullName>
        <shortName evidence="2">AMPSase</shortName>
        <shortName evidence="2">AdSS</shortName>
        <ecNumber evidence="2">6.3.4.4</ecNumber>
    </recommendedName>
    <alternativeName>
        <fullName evidence="2">IMP--aspartate ligase</fullName>
    </alternativeName>
</protein>
<name>PURA_DROGR</name>
<proteinExistence type="inferred from homology"/>
<reference key="1">
    <citation type="journal article" date="2007" name="Nature">
        <title>Evolution of genes and genomes on the Drosophila phylogeny.</title>
        <authorList>
            <consortium name="Drosophila 12 genomes consortium"/>
        </authorList>
    </citation>
    <scope>NUCLEOTIDE SEQUENCE [LARGE SCALE GENOMIC DNA]</scope>
    <source>
        <strain>Tucson 15287-2541.00</strain>
    </source>
</reference>
<sequence>MSTTTIASNAVNGNHYEQLHQGRTKMYKSKVDVVLGAQWGDEGKGKVVDMLASEVDIVCRCQGGNNAGHTVVANGTEFDFHLLPSGVVNEKCISVIGNGVVIHLPSLFDEVLKNEAKGLIHLENRLIISDRAHLVFDFHQHVDGMQEAEKGGKSLGTTKKGIGPAYSSKATRNGIRVGELLGEFNLFSEKFKSIVNTHLRLFPSIKVDIDAELVRYKDYAEKIRPYVKDTICFLHTALRNGKTILVEGANAAMLDIDFGTYPYVTSSNCSIGGVLTGLGLPPQTIGEVIGVVKAYTTRVGDGPFPTEQLNEIGDLLQTRGFEVGVTTKRKRRCGWLDIPLLQYTSLVNGYTCICITKLDILDTLAEIKVGVSYRRSNGDKLDHFPGTISELGGIEVEYAILPGWQTSTEHVRNFKELPENAQSYVRFLESHLSVPVRWVGVGKGRESIINVH</sequence>
<feature type="chain" id="PRO_0000399260" description="Adenylosuccinate synthetase">
    <location>
        <begin position="1"/>
        <end position="452"/>
    </location>
</feature>
<feature type="active site" description="Proton acceptor" evidence="2">
    <location>
        <position position="41"/>
    </location>
</feature>
<feature type="active site" description="Proton donor" evidence="2">
    <location>
        <position position="69"/>
    </location>
</feature>
<feature type="binding site" evidence="2">
    <location>
        <begin position="40"/>
        <end position="46"/>
    </location>
    <ligand>
        <name>GTP</name>
        <dbReference type="ChEBI" id="CHEBI:37565"/>
    </ligand>
</feature>
<feature type="binding site" description="in other chain" evidence="2">
    <location>
        <begin position="41"/>
        <end position="44"/>
    </location>
    <ligand>
        <name>IMP</name>
        <dbReference type="ChEBI" id="CHEBI:58053"/>
        <note>ligand shared between dimeric partners</note>
    </ligand>
</feature>
<feature type="binding site" evidence="2">
    <location>
        <position position="41"/>
    </location>
    <ligand>
        <name>Mg(2+)</name>
        <dbReference type="ChEBI" id="CHEBI:18420"/>
    </ligand>
</feature>
<feature type="binding site" description="in other chain" evidence="2">
    <location>
        <begin position="66"/>
        <end position="69"/>
    </location>
    <ligand>
        <name>IMP</name>
        <dbReference type="ChEBI" id="CHEBI:58053"/>
        <note>ligand shared between dimeric partners</note>
    </ligand>
</feature>
<feature type="binding site" evidence="2">
    <location>
        <begin position="68"/>
        <end position="70"/>
    </location>
    <ligand>
        <name>GTP</name>
        <dbReference type="ChEBI" id="CHEBI:37565"/>
    </ligand>
</feature>
<feature type="binding site" evidence="2">
    <location>
        <position position="68"/>
    </location>
    <ligand>
        <name>Mg(2+)</name>
        <dbReference type="ChEBI" id="CHEBI:18420"/>
    </ligand>
</feature>
<feature type="binding site" description="in other chain" evidence="2">
    <location>
        <position position="158"/>
    </location>
    <ligand>
        <name>IMP</name>
        <dbReference type="ChEBI" id="CHEBI:58053"/>
        <note>ligand shared between dimeric partners</note>
    </ligand>
</feature>
<feature type="binding site" evidence="2">
    <location>
        <position position="172"/>
    </location>
    <ligand>
        <name>IMP</name>
        <dbReference type="ChEBI" id="CHEBI:58053"/>
        <note>ligand shared between dimeric partners</note>
    </ligand>
</feature>
<feature type="binding site" description="in other chain" evidence="2">
    <location>
        <position position="250"/>
    </location>
    <ligand>
        <name>IMP</name>
        <dbReference type="ChEBI" id="CHEBI:58053"/>
        <note>ligand shared between dimeric partners</note>
    </ligand>
</feature>
<feature type="binding site" description="in other chain" evidence="2">
    <location>
        <position position="265"/>
    </location>
    <ligand>
        <name>IMP</name>
        <dbReference type="ChEBI" id="CHEBI:58053"/>
        <note>ligand shared between dimeric partners</note>
    </ligand>
</feature>
<feature type="binding site" evidence="2">
    <location>
        <begin position="325"/>
        <end position="331"/>
    </location>
    <ligand>
        <name>substrate</name>
    </ligand>
</feature>
<feature type="binding site" description="in other chain" evidence="2">
    <location>
        <position position="329"/>
    </location>
    <ligand>
        <name>IMP</name>
        <dbReference type="ChEBI" id="CHEBI:58053"/>
        <note>ligand shared between dimeric partners</note>
    </ligand>
</feature>
<feature type="binding site" evidence="2">
    <location>
        <position position="331"/>
    </location>
    <ligand>
        <name>GTP</name>
        <dbReference type="ChEBI" id="CHEBI:37565"/>
    </ligand>
</feature>
<feature type="binding site" evidence="2">
    <location>
        <begin position="357"/>
        <end position="359"/>
    </location>
    <ligand>
        <name>GTP</name>
        <dbReference type="ChEBI" id="CHEBI:37565"/>
    </ligand>
</feature>
<feature type="binding site" evidence="2">
    <location>
        <begin position="440"/>
        <end position="442"/>
    </location>
    <ligand>
        <name>GTP</name>
        <dbReference type="ChEBI" id="CHEBI:37565"/>
    </ligand>
</feature>
<organism>
    <name type="scientific">Drosophila grimshawi</name>
    <name type="common">Hawaiian fruit fly</name>
    <name type="synonym">Idiomyia grimshawi</name>
    <dbReference type="NCBI Taxonomy" id="7222"/>
    <lineage>
        <taxon>Eukaryota</taxon>
        <taxon>Metazoa</taxon>
        <taxon>Ecdysozoa</taxon>
        <taxon>Arthropoda</taxon>
        <taxon>Hexapoda</taxon>
        <taxon>Insecta</taxon>
        <taxon>Pterygota</taxon>
        <taxon>Neoptera</taxon>
        <taxon>Endopterygota</taxon>
        <taxon>Diptera</taxon>
        <taxon>Brachycera</taxon>
        <taxon>Muscomorpha</taxon>
        <taxon>Ephydroidea</taxon>
        <taxon>Drosophilidae</taxon>
        <taxon>Drosophila</taxon>
        <taxon>Hawaiian Drosophila</taxon>
    </lineage>
</organism>
<dbReference type="EC" id="6.3.4.4" evidence="2"/>
<dbReference type="EMBL" id="CH916374">
    <property type="protein sequence ID" value="EDV91114.1"/>
    <property type="molecule type" value="Genomic_DNA"/>
</dbReference>
<dbReference type="SMR" id="B4JUE4"/>
<dbReference type="FunCoup" id="B4JUE4">
    <property type="interactions" value="1480"/>
</dbReference>
<dbReference type="STRING" id="7222.B4JUE4"/>
<dbReference type="EnsemblMetazoa" id="FBtr0151341">
    <property type="protein sequence ID" value="FBpp0149833"/>
    <property type="gene ID" value="FBgn0123398"/>
</dbReference>
<dbReference type="EnsemblMetazoa" id="XM_001994449.2">
    <property type="protein sequence ID" value="XP_001994485.1"/>
    <property type="gene ID" value="LOC6568148"/>
</dbReference>
<dbReference type="GeneID" id="6568148"/>
<dbReference type="KEGG" id="dgr:6568148"/>
<dbReference type="eggNOG" id="KOG1355">
    <property type="taxonomic scope" value="Eukaryota"/>
</dbReference>
<dbReference type="HOGENOM" id="CLU_029848_3_0_1"/>
<dbReference type="InParanoid" id="B4JUE4"/>
<dbReference type="OMA" id="QSYVRFL"/>
<dbReference type="OrthoDB" id="10265645at2759"/>
<dbReference type="PhylomeDB" id="B4JUE4"/>
<dbReference type="UniPathway" id="UPA00075">
    <property type="reaction ID" value="UER00335"/>
</dbReference>
<dbReference type="Proteomes" id="UP000001070">
    <property type="component" value="Unassembled WGS sequence"/>
</dbReference>
<dbReference type="GO" id="GO:0005737">
    <property type="term" value="C:cytoplasm"/>
    <property type="evidence" value="ECO:0007669"/>
    <property type="project" value="UniProtKB-SubCell"/>
</dbReference>
<dbReference type="GO" id="GO:0004019">
    <property type="term" value="F:adenylosuccinate synthase activity"/>
    <property type="evidence" value="ECO:0007669"/>
    <property type="project" value="UniProtKB-UniRule"/>
</dbReference>
<dbReference type="GO" id="GO:0005525">
    <property type="term" value="F:GTP binding"/>
    <property type="evidence" value="ECO:0007669"/>
    <property type="project" value="UniProtKB-UniRule"/>
</dbReference>
<dbReference type="GO" id="GO:0000287">
    <property type="term" value="F:magnesium ion binding"/>
    <property type="evidence" value="ECO:0007669"/>
    <property type="project" value="UniProtKB-UniRule"/>
</dbReference>
<dbReference type="GO" id="GO:0044208">
    <property type="term" value="P:'de novo' AMP biosynthetic process"/>
    <property type="evidence" value="ECO:0007669"/>
    <property type="project" value="UniProtKB-UniRule"/>
</dbReference>
<dbReference type="GO" id="GO:0046040">
    <property type="term" value="P:IMP metabolic process"/>
    <property type="evidence" value="ECO:0007669"/>
    <property type="project" value="TreeGrafter"/>
</dbReference>
<dbReference type="CDD" id="cd03108">
    <property type="entry name" value="AdSS"/>
    <property type="match status" value="1"/>
</dbReference>
<dbReference type="FunFam" id="3.90.170.10:FF:000001">
    <property type="entry name" value="Adenylosuccinate synthetase"/>
    <property type="match status" value="1"/>
</dbReference>
<dbReference type="FunFam" id="1.10.300.10:FF:000002">
    <property type="entry name" value="Adenylosuccinate synthetase, chloroplastic"/>
    <property type="match status" value="1"/>
</dbReference>
<dbReference type="Gene3D" id="3.40.440.10">
    <property type="entry name" value="Adenylosuccinate Synthetase, subunit A, domain 1"/>
    <property type="match status" value="1"/>
</dbReference>
<dbReference type="Gene3D" id="1.10.300.10">
    <property type="entry name" value="Adenylosuccinate Synthetase, subunit A, domain 2"/>
    <property type="match status" value="1"/>
</dbReference>
<dbReference type="Gene3D" id="3.90.170.10">
    <property type="entry name" value="Adenylosuccinate Synthetase, subunit A, domain 3"/>
    <property type="match status" value="1"/>
</dbReference>
<dbReference type="HAMAP" id="MF_00011">
    <property type="entry name" value="Adenylosucc_synth"/>
    <property type="match status" value="1"/>
</dbReference>
<dbReference type="InterPro" id="IPR018220">
    <property type="entry name" value="Adenylosuccin_syn_GTP-bd"/>
</dbReference>
<dbReference type="InterPro" id="IPR033128">
    <property type="entry name" value="Adenylosuccin_syn_Lys_AS"/>
</dbReference>
<dbReference type="InterPro" id="IPR042109">
    <property type="entry name" value="Adenylosuccinate_synth_dom1"/>
</dbReference>
<dbReference type="InterPro" id="IPR042110">
    <property type="entry name" value="Adenylosuccinate_synth_dom2"/>
</dbReference>
<dbReference type="InterPro" id="IPR042111">
    <property type="entry name" value="Adenylosuccinate_synth_dom3"/>
</dbReference>
<dbReference type="InterPro" id="IPR001114">
    <property type="entry name" value="Adenylosuccinate_synthetase"/>
</dbReference>
<dbReference type="InterPro" id="IPR027417">
    <property type="entry name" value="P-loop_NTPase"/>
</dbReference>
<dbReference type="NCBIfam" id="NF002223">
    <property type="entry name" value="PRK01117.1"/>
    <property type="match status" value="1"/>
</dbReference>
<dbReference type="NCBIfam" id="TIGR00184">
    <property type="entry name" value="purA"/>
    <property type="match status" value="1"/>
</dbReference>
<dbReference type="PANTHER" id="PTHR11846">
    <property type="entry name" value="ADENYLOSUCCINATE SYNTHETASE"/>
    <property type="match status" value="1"/>
</dbReference>
<dbReference type="PANTHER" id="PTHR11846:SF0">
    <property type="entry name" value="ADENYLOSUCCINATE SYNTHETASE"/>
    <property type="match status" value="1"/>
</dbReference>
<dbReference type="Pfam" id="PF00709">
    <property type="entry name" value="Adenylsucc_synt"/>
    <property type="match status" value="1"/>
</dbReference>
<dbReference type="SMART" id="SM00788">
    <property type="entry name" value="Adenylsucc_synt"/>
    <property type="match status" value="1"/>
</dbReference>
<dbReference type="SUPFAM" id="SSF52540">
    <property type="entry name" value="P-loop containing nucleoside triphosphate hydrolases"/>
    <property type="match status" value="1"/>
</dbReference>
<dbReference type="PROSITE" id="PS01266">
    <property type="entry name" value="ADENYLOSUCCIN_SYN_1"/>
    <property type="match status" value="1"/>
</dbReference>
<dbReference type="PROSITE" id="PS00513">
    <property type="entry name" value="ADENYLOSUCCIN_SYN_2"/>
    <property type="match status" value="1"/>
</dbReference>
<comment type="function">
    <text evidence="1">Plays an important role in the de novo pathway and in the salvage pathway of purine nucleotide biosynthesis. Catalyzes the first committed step in the biosynthesis of AMP from IMP (By similarity).</text>
</comment>
<comment type="catalytic activity">
    <reaction evidence="2">
        <text>IMP + L-aspartate + GTP = N(6)-(1,2-dicarboxyethyl)-AMP + GDP + phosphate + 2 H(+)</text>
        <dbReference type="Rhea" id="RHEA:15753"/>
        <dbReference type="ChEBI" id="CHEBI:15378"/>
        <dbReference type="ChEBI" id="CHEBI:29991"/>
        <dbReference type="ChEBI" id="CHEBI:37565"/>
        <dbReference type="ChEBI" id="CHEBI:43474"/>
        <dbReference type="ChEBI" id="CHEBI:57567"/>
        <dbReference type="ChEBI" id="CHEBI:58053"/>
        <dbReference type="ChEBI" id="CHEBI:58189"/>
        <dbReference type="EC" id="6.3.4.4"/>
    </reaction>
</comment>
<comment type="cofactor">
    <cofactor evidence="2">
        <name>Mg(2+)</name>
        <dbReference type="ChEBI" id="CHEBI:18420"/>
    </cofactor>
    <text evidence="2">Binds 1 Mg(2+) ion per subunit.</text>
</comment>
<comment type="pathway">
    <text evidence="2">Purine metabolism; AMP biosynthesis via de novo pathway; AMP from IMP: step 1/2.</text>
</comment>
<comment type="subunit">
    <text evidence="2">Homodimer.</text>
</comment>
<comment type="subcellular location">
    <subcellularLocation>
        <location evidence="2">Cytoplasm</location>
    </subcellularLocation>
</comment>
<comment type="similarity">
    <text evidence="2">Belongs to the adenylosuccinate synthetase family.</text>
</comment>
<evidence type="ECO:0000250" key="1"/>
<evidence type="ECO:0000255" key="2">
    <source>
        <dbReference type="HAMAP-Rule" id="MF_03125"/>
    </source>
</evidence>